<feature type="chain" id="PRO_1000078425" description="ATP-dependent protease subunit HslV">
    <location>
        <begin position="1"/>
        <end position="188"/>
    </location>
</feature>
<feature type="active site" evidence="1">
    <location>
        <position position="8"/>
    </location>
</feature>
<feature type="binding site" evidence="1">
    <location>
        <position position="165"/>
    </location>
    <ligand>
        <name>Na(+)</name>
        <dbReference type="ChEBI" id="CHEBI:29101"/>
    </ligand>
</feature>
<feature type="binding site" evidence="1">
    <location>
        <position position="168"/>
    </location>
    <ligand>
        <name>Na(+)</name>
        <dbReference type="ChEBI" id="CHEBI:29101"/>
    </ligand>
</feature>
<feature type="binding site" evidence="1">
    <location>
        <position position="171"/>
    </location>
    <ligand>
        <name>Na(+)</name>
        <dbReference type="ChEBI" id="CHEBI:29101"/>
    </ligand>
</feature>
<keyword id="KW-0021">Allosteric enzyme</keyword>
<keyword id="KW-0963">Cytoplasm</keyword>
<keyword id="KW-0378">Hydrolase</keyword>
<keyword id="KW-0479">Metal-binding</keyword>
<keyword id="KW-0645">Protease</keyword>
<keyword id="KW-0915">Sodium</keyword>
<keyword id="KW-0346">Stress response</keyword>
<keyword id="KW-0888">Threonine protease</keyword>
<dbReference type="EC" id="3.4.25.2" evidence="1"/>
<dbReference type="EMBL" id="CP000237">
    <property type="protein sequence ID" value="ABD45747.1"/>
    <property type="molecule type" value="Genomic_DNA"/>
</dbReference>
<dbReference type="RefSeq" id="WP_011451577.1">
    <property type="nucleotide sequence ID" value="NC_007798.1"/>
</dbReference>
<dbReference type="SMR" id="Q2GEM5"/>
<dbReference type="STRING" id="222891.NSE_0176"/>
<dbReference type="MEROPS" id="T01.006"/>
<dbReference type="KEGG" id="nse:NSE_0176"/>
<dbReference type="eggNOG" id="COG5405">
    <property type="taxonomic scope" value="Bacteria"/>
</dbReference>
<dbReference type="HOGENOM" id="CLU_093872_1_0_5"/>
<dbReference type="OrthoDB" id="9804884at2"/>
<dbReference type="Proteomes" id="UP000001942">
    <property type="component" value="Chromosome"/>
</dbReference>
<dbReference type="GO" id="GO:0009376">
    <property type="term" value="C:HslUV protease complex"/>
    <property type="evidence" value="ECO:0007669"/>
    <property type="project" value="UniProtKB-UniRule"/>
</dbReference>
<dbReference type="GO" id="GO:0005839">
    <property type="term" value="C:proteasome core complex"/>
    <property type="evidence" value="ECO:0007669"/>
    <property type="project" value="InterPro"/>
</dbReference>
<dbReference type="GO" id="GO:0046872">
    <property type="term" value="F:metal ion binding"/>
    <property type="evidence" value="ECO:0007669"/>
    <property type="project" value="UniProtKB-KW"/>
</dbReference>
<dbReference type="GO" id="GO:0004298">
    <property type="term" value="F:threonine-type endopeptidase activity"/>
    <property type="evidence" value="ECO:0007669"/>
    <property type="project" value="UniProtKB-KW"/>
</dbReference>
<dbReference type="GO" id="GO:0051603">
    <property type="term" value="P:proteolysis involved in protein catabolic process"/>
    <property type="evidence" value="ECO:0007669"/>
    <property type="project" value="InterPro"/>
</dbReference>
<dbReference type="CDD" id="cd01913">
    <property type="entry name" value="protease_HslV"/>
    <property type="match status" value="1"/>
</dbReference>
<dbReference type="Gene3D" id="3.60.20.10">
    <property type="entry name" value="Glutamine Phosphoribosylpyrophosphate, subunit 1, domain 1"/>
    <property type="match status" value="1"/>
</dbReference>
<dbReference type="HAMAP" id="MF_00248">
    <property type="entry name" value="HslV"/>
    <property type="match status" value="1"/>
</dbReference>
<dbReference type="InterPro" id="IPR022281">
    <property type="entry name" value="ATP-dep_Prtase_HsIV_su"/>
</dbReference>
<dbReference type="InterPro" id="IPR029055">
    <property type="entry name" value="Ntn_hydrolases_N"/>
</dbReference>
<dbReference type="InterPro" id="IPR001353">
    <property type="entry name" value="Proteasome_sua/b"/>
</dbReference>
<dbReference type="InterPro" id="IPR023333">
    <property type="entry name" value="Proteasome_suB-type"/>
</dbReference>
<dbReference type="NCBIfam" id="TIGR03692">
    <property type="entry name" value="ATP_dep_HslV"/>
    <property type="match status" value="1"/>
</dbReference>
<dbReference type="NCBIfam" id="NF003964">
    <property type="entry name" value="PRK05456.1"/>
    <property type="match status" value="1"/>
</dbReference>
<dbReference type="PANTHER" id="PTHR32194:SF7">
    <property type="entry name" value="ATP-DEPENDENT PROTEASE SUBUNIT HSLV"/>
    <property type="match status" value="1"/>
</dbReference>
<dbReference type="PANTHER" id="PTHR32194">
    <property type="entry name" value="METALLOPROTEASE TLDD"/>
    <property type="match status" value="1"/>
</dbReference>
<dbReference type="Pfam" id="PF00227">
    <property type="entry name" value="Proteasome"/>
    <property type="match status" value="1"/>
</dbReference>
<dbReference type="PIRSF" id="PIRSF039093">
    <property type="entry name" value="HslV"/>
    <property type="match status" value="1"/>
</dbReference>
<dbReference type="SUPFAM" id="SSF56235">
    <property type="entry name" value="N-terminal nucleophile aminohydrolases (Ntn hydrolases)"/>
    <property type="match status" value="1"/>
</dbReference>
<dbReference type="PROSITE" id="PS51476">
    <property type="entry name" value="PROTEASOME_BETA_2"/>
    <property type="match status" value="1"/>
</dbReference>
<organism>
    <name type="scientific">Neorickettsia sennetsu (strain ATCC VR-367 / Miyayama)</name>
    <name type="common">Ehrlichia sennetsu</name>
    <dbReference type="NCBI Taxonomy" id="222891"/>
    <lineage>
        <taxon>Bacteria</taxon>
        <taxon>Pseudomonadati</taxon>
        <taxon>Pseudomonadota</taxon>
        <taxon>Alphaproteobacteria</taxon>
        <taxon>Rickettsiales</taxon>
        <taxon>Anaplasmataceae</taxon>
        <taxon>Neorickettsia</taxon>
    </lineage>
</organism>
<accession>Q2GEM5</accession>
<comment type="function">
    <text evidence="1">Protease subunit of a proteasome-like degradation complex believed to be a general protein degrading machinery.</text>
</comment>
<comment type="catalytic activity">
    <reaction evidence="1">
        <text>ATP-dependent cleavage of peptide bonds with broad specificity.</text>
        <dbReference type="EC" id="3.4.25.2"/>
    </reaction>
</comment>
<comment type="activity regulation">
    <text evidence="1">Allosterically activated by HslU binding.</text>
</comment>
<comment type="subunit">
    <text evidence="1">A double ring-shaped homohexamer of HslV is capped on each side by a ring-shaped HslU homohexamer. The assembly of the HslU/HslV complex is dependent on binding of ATP.</text>
</comment>
<comment type="subcellular location">
    <subcellularLocation>
        <location evidence="1">Cytoplasm</location>
    </subcellularLocation>
</comment>
<comment type="similarity">
    <text evidence="1">Belongs to the peptidase T1B family. HslV subfamily.</text>
</comment>
<evidence type="ECO:0000255" key="1">
    <source>
        <dbReference type="HAMAP-Rule" id="MF_00248"/>
    </source>
</evidence>
<reference key="1">
    <citation type="journal article" date="2006" name="PLoS Genet.">
        <title>Comparative genomics of emerging human ehrlichiosis agents.</title>
        <authorList>
            <person name="Dunning Hotopp J.C."/>
            <person name="Lin M."/>
            <person name="Madupu R."/>
            <person name="Crabtree J."/>
            <person name="Angiuoli S.V."/>
            <person name="Eisen J.A."/>
            <person name="Seshadri R."/>
            <person name="Ren Q."/>
            <person name="Wu M."/>
            <person name="Utterback T.R."/>
            <person name="Smith S."/>
            <person name="Lewis M."/>
            <person name="Khouri H."/>
            <person name="Zhang C."/>
            <person name="Niu H."/>
            <person name="Lin Q."/>
            <person name="Ohashi N."/>
            <person name="Zhi N."/>
            <person name="Nelson W.C."/>
            <person name="Brinkac L.M."/>
            <person name="Dodson R.J."/>
            <person name="Rosovitz M.J."/>
            <person name="Sundaram J.P."/>
            <person name="Daugherty S.C."/>
            <person name="Davidsen T."/>
            <person name="Durkin A.S."/>
            <person name="Gwinn M.L."/>
            <person name="Haft D.H."/>
            <person name="Selengut J.D."/>
            <person name="Sullivan S.A."/>
            <person name="Zafar N."/>
            <person name="Zhou L."/>
            <person name="Benahmed F."/>
            <person name="Forberger H."/>
            <person name="Halpin R."/>
            <person name="Mulligan S."/>
            <person name="Robinson J."/>
            <person name="White O."/>
            <person name="Rikihisa Y."/>
            <person name="Tettelin H."/>
        </authorList>
    </citation>
    <scope>NUCLEOTIDE SEQUENCE [LARGE SCALE GENOMIC DNA]</scope>
    <source>
        <strain>ATCC VR-367 / Miyayama</strain>
    </source>
</reference>
<proteinExistence type="inferred from homology"/>
<name>HSLV_NEOSM</name>
<gene>
    <name evidence="1" type="primary">hslV</name>
    <name type="ordered locus">NSE_0176</name>
</gene>
<protein>
    <recommendedName>
        <fullName evidence="1">ATP-dependent protease subunit HslV</fullName>
        <ecNumber evidence="1">3.4.25.2</ecNumber>
    </recommendedName>
</protein>
<sequence>MGTGFHGTTILSIRKDDKVVMIGDGQVTMGNAVVVKSTAQKVKRLSNGKIISGFAGSTADAFTLFERLESKLEAHPGQLLRACVELAKDWRTDKFLRRLEAMMIVADARGTLILNGAGDVIEPEDSVAAIGSGGNYALAAAKALIVHASDLDAFQIAEAAMKIAAKICVFTNENFTVEVIDCASKECS</sequence>